<dbReference type="EC" id="1.4.3.5" evidence="1"/>
<dbReference type="EMBL" id="CP000569">
    <property type="protein sequence ID" value="ABN75083.1"/>
    <property type="molecule type" value="Genomic_DNA"/>
</dbReference>
<dbReference type="RefSeq" id="WP_005606603.1">
    <property type="nucleotide sequence ID" value="NC_009053.1"/>
</dbReference>
<dbReference type="SMR" id="A3N3U7"/>
<dbReference type="STRING" id="416269.APL_2009"/>
<dbReference type="EnsemblBacteria" id="ABN75083">
    <property type="protein sequence ID" value="ABN75083"/>
    <property type="gene ID" value="APL_2009"/>
</dbReference>
<dbReference type="KEGG" id="apl:APL_2009"/>
<dbReference type="eggNOG" id="COG0259">
    <property type="taxonomic scope" value="Bacteria"/>
</dbReference>
<dbReference type="HOGENOM" id="CLU_032263_2_2_6"/>
<dbReference type="UniPathway" id="UPA01068">
    <property type="reaction ID" value="UER00304"/>
</dbReference>
<dbReference type="UniPathway" id="UPA01068">
    <property type="reaction ID" value="UER00305"/>
</dbReference>
<dbReference type="Proteomes" id="UP000001432">
    <property type="component" value="Chromosome"/>
</dbReference>
<dbReference type="GO" id="GO:0010181">
    <property type="term" value="F:FMN binding"/>
    <property type="evidence" value="ECO:0007669"/>
    <property type="project" value="UniProtKB-UniRule"/>
</dbReference>
<dbReference type="GO" id="GO:0004733">
    <property type="term" value="F:pyridoxamine phosphate oxidase activity"/>
    <property type="evidence" value="ECO:0007669"/>
    <property type="project" value="UniProtKB-UniRule"/>
</dbReference>
<dbReference type="GO" id="GO:0008615">
    <property type="term" value="P:pyridoxine biosynthetic process"/>
    <property type="evidence" value="ECO:0007669"/>
    <property type="project" value="UniProtKB-KW"/>
</dbReference>
<dbReference type="FunFam" id="2.30.110.10:FF:000014">
    <property type="entry name" value="Pyridoxine/pyridoxamine 5'-phosphate oxidase"/>
    <property type="match status" value="1"/>
</dbReference>
<dbReference type="Gene3D" id="2.30.110.10">
    <property type="entry name" value="Electron Transport, Fmn-binding Protein, Chain A"/>
    <property type="match status" value="1"/>
</dbReference>
<dbReference type="HAMAP" id="MF_01629">
    <property type="entry name" value="PdxH"/>
    <property type="match status" value="1"/>
</dbReference>
<dbReference type="InterPro" id="IPR000659">
    <property type="entry name" value="Pyridox_Oxase"/>
</dbReference>
<dbReference type="InterPro" id="IPR019740">
    <property type="entry name" value="Pyridox_Oxase_CS"/>
</dbReference>
<dbReference type="InterPro" id="IPR011576">
    <property type="entry name" value="Pyridox_Oxase_N"/>
</dbReference>
<dbReference type="InterPro" id="IPR019576">
    <property type="entry name" value="Pyridoxamine_oxidase_dimer_C"/>
</dbReference>
<dbReference type="InterPro" id="IPR012349">
    <property type="entry name" value="Split_barrel_FMN-bd"/>
</dbReference>
<dbReference type="NCBIfam" id="TIGR00558">
    <property type="entry name" value="pdxH"/>
    <property type="match status" value="1"/>
</dbReference>
<dbReference type="NCBIfam" id="NF004231">
    <property type="entry name" value="PRK05679.1"/>
    <property type="match status" value="1"/>
</dbReference>
<dbReference type="PANTHER" id="PTHR10851:SF0">
    <property type="entry name" value="PYRIDOXINE-5'-PHOSPHATE OXIDASE"/>
    <property type="match status" value="1"/>
</dbReference>
<dbReference type="PANTHER" id="PTHR10851">
    <property type="entry name" value="PYRIDOXINE-5-PHOSPHATE OXIDASE"/>
    <property type="match status" value="1"/>
</dbReference>
<dbReference type="Pfam" id="PF10590">
    <property type="entry name" value="PNP_phzG_C"/>
    <property type="match status" value="1"/>
</dbReference>
<dbReference type="Pfam" id="PF01243">
    <property type="entry name" value="PNPOx_N"/>
    <property type="match status" value="1"/>
</dbReference>
<dbReference type="PIRSF" id="PIRSF000190">
    <property type="entry name" value="Pyd_amn-ph_oxd"/>
    <property type="match status" value="1"/>
</dbReference>
<dbReference type="SUPFAM" id="SSF50475">
    <property type="entry name" value="FMN-binding split barrel"/>
    <property type="match status" value="1"/>
</dbReference>
<dbReference type="PROSITE" id="PS01064">
    <property type="entry name" value="PYRIDOX_OXIDASE"/>
    <property type="match status" value="1"/>
</dbReference>
<sequence length="209" mass="23957">MDLHNIREDYSKQELSQANCHADPIQQFEQWLEEAITAKANEPTAMNVATVLDGKPTSRIVLLKEVNPNGFVFFTNYQSRKGQAIEQNPYVALTFFWAELERSVRIEGRIEKISAEQSDNYFASRPYTSRVGAWASNQSQVLSSKSELVAKAALIAAKHPLHVPRPPHWGGYIVLPERIEFWQGRPSRLHDRICYRLVEGAWHKERLSP</sequence>
<keyword id="KW-0285">Flavoprotein</keyword>
<keyword id="KW-0288">FMN</keyword>
<keyword id="KW-0560">Oxidoreductase</keyword>
<keyword id="KW-0664">Pyridoxine biosynthesis</keyword>
<keyword id="KW-1185">Reference proteome</keyword>
<reference key="1">
    <citation type="journal article" date="2008" name="J. Bacteriol.">
        <title>The complete genome sequence of Actinobacillus pleuropneumoniae L20 (serotype 5b).</title>
        <authorList>
            <person name="Foote S.J."/>
            <person name="Bosse J.T."/>
            <person name="Bouevitch A.B."/>
            <person name="Langford P.R."/>
            <person name="Young N.M."/>
            <person name="Nash J.H.E."/>
        </authorList>
    </citation>
    <scope>NUCLEOTIDE SEQUENCE [LARGE SCALE GENOMIC DNA]</scope>
    <source>
        <strain>L20</strain>
    </source>
</reference>
<organism>
    <name type="scientific">Actinobacillus pleuropneumoniae serotype 5b (strain L20)</name>
    <dbReference type="NCBI Taxonomy" id="416269"/>
    <lineage>
        <taxon>Bacteria</taxon>
        <taxon>Pseudomonadati</taxon>
        <taxon>Pseudomonadota</taxon>
        <taxon>Gammaproteobacteria</taxon>
        <taxon>Pasteurellales</taxon>
        <taxon>Pasteurellaceae</taxon>
        <taxon>Actinobacillus</taxon>
    </lineage>
</organism>
<protein>
    <recommendedName>
        <fullName evidence="1">Pyridoxine/pyridoxamine 5'-phosphate oxidase</fullName>
        <ecNumber evidence="1">1.4.3.5</ecNumber>
    </recommendedName>
    <alternativeName>
        <fullName evidence="1">PNP/PMP oxidase</fullName>
        <shortName evidence="1">PNPOx</shortName>
    </alternativeName>
    <alternativeName>
        <fullName evidence="1">Pyridoxal 5'-phosphate synthase</fullName>
    </alternativeName>
</protein>
<accession>A3N3U7</accession>
<gene>
    <name evidence="1" type="primary">pdxH</name>
    <name type="ordered locus">APL_2009</name>
</gene>
<feature type="chain" id="PRO_0000292284" description="Pyridoxine/pyridoxamine 5'-phosphate oxidase">
    <location>
        <begin position="1"/>
        <end position="209"/>
    </location>
</feature>
<feature type="binding site" evidence="1">
    <location>
        <begin position="7"/>
        <end position="10"/>
    </location>
    <ligand>
        <name>substrate</name>
    </ligand>
</feature>
<feature type="binding site" evidence="1">
    <location>
        <begin position="59"/>
        <end position="64"/>
    </location>
    <ligand>
        <name>FMN</name>
        <dbReference type="ChEBI" id="CHEBI:58210"/>
    </ligand>
</feature>
<feature type="binding site" evidence="1">
    <location>
        <position position="64"/>
    </location>
    <ligand>
        <name>substrate</name>
    </ligand>
</feature>
<feature type="binding site" evidence="1">
    <location>
        <begin position="74"/>
        <end position="75"/>
    </location>
    <ligand>
        <name>FMN</name>
        <dbReference type="ChEBI" id="CHEBI:58210"/>
    </ligand>
</feature>
<feature type="binding site" evidence="1">
    <location>
        <position position="80"/>
    </location>
    <ligand>
        <name>FMN</name>
        <dbReference type="ChEBI" id="CHEBI:58210"/>
    </ligand>
</feature>
<feature type="binding site" evidence="1">
    <location>
        <position position="81"/>
    </location>
    <ligand>
        <name>FMN</name>
        <dbReference type="ChEBI" id="CHEBI:58210"/>
    </ligand>
</feature>
<feature type="binding site" evidence="1">
    <location>
        <position position="121"/>
    </location>
    <ligand>
        <name>substrate</name>
    </ligand>
</feature>
<feature type="binding site" evidence="1">
    <location>
        <position position="125"/>
    </location>
    <ligand>
        <name>substrate</name>
    </ligand>
</feature>
<feature type="binding site" evidence="1">
    <location>
        <position position="129"/>
    </location>
    <ligand>
        <name>substrate</name>
    </ligand>
</feature>
<feature type="binding site" evidence="1">
    <location>
        <begin position="138"/>
        <end position="139"/>
    </location>
    <ligand>
        <name>FMN</name>
        <dbReference type="ChEBI" id="CHEBI:58210"/>
    </ligand>
</feature>
<feature type="binding site" evidence="1">
    <location>
        <position position="182"/>
    </location>
    <ligand>
        <name>FMN</name>
        <dbReference type="ChEBI" id="CHEBI:58210"/>
    </ligand>
</feature>
<feature type="binding site" evidence="1">
    <location>
        <begin position="188"/>
        <end position="190"/>
    </location>
    <ligand>
        <name>substrate</name>
    </ligand>
</feature>
<feature type="binding site" evidence="1">
    <location>
        <position position="192"/>
    </location>
    <ligand>
        <name>FMN</name>
        <dbReference type="ChEBI" id="CHEBI:58210"/>
    </ligand>
</feature>
<evidence type="ECO:0000255" key="1">
    <source>
        <dbReference type="HAMAP-Rule" id="MF_01629"/>
    </source>
</evidence>
<name>PDXH_ACTP2</name>
<comment type="function">
    <text evidence="1">Catalyzes the oxidation of either pyridoxine 5'-phosphate (PNP) or pyridoxamine 5'-phosphate (PMP) into pyridoxal 5'-phosphate (PLP).</text>
</comment>
<comment type="catalytic activity">
    <reaction evidence="1">
        <text>pyridoxamine 5'-phosphate + O2 + H2O = pyridoxal 5'-phosphate + H2O2 + NH4(+)</text>
        <dbReference type="Rhea" id="RHEA:15817"/>
        <dbReference type="ChEBI" id="CHEBI:15377"/>
        <dbReference type="ChEBI" id="CHEBI:15379"/>
        <dbReference type="ChEBI" id="CHEBI:16240"/>
        <dbReference type="ChEBI" id="CHEBI:28938"/>
        <dbReference type="ChEBI" id="CHEBI:58451"/>
        <dbReference type="ChEBI" id="CHEBI:597326"/>
        <dbReference type="EC" id="1.4.3.5"/>
    </reaction>
</comment>
<comment type="catalytic activity">
    <reaction evidence="1">
        <text>pyridoxine 5'-phosphate + O2 = pyridoxal 5'-phosphate + H2O2</text>
        <dbReference type="Rhea" id="RHEA:15149"/>
        <dbReference type="ChEBI" id="CHEBI:15379"/>
        <dbReference type="ChEBI" id="CHEBI:16240"/>
        <dbReference type="ChEBI" id="CHEBI:58589"/>
        <dbReference type="ChEBI" id="CHEBI:597326"/>
        <dbReference type="EC" id="1.4.3.5"/>
    </reaction>
</comment>
<comment type="cofactor">
    <cofactor evidence="1">
        <name>FMN</name>
        <dbReference type="ChEBI" id="CHEBI:58210"/>
    </cofactor>
    <text evidence="1">Binds 1 FMN per subunit.</text>
</comment>
<comment type="pathway">
    <text evidence="1">Cofactor metabolism; pyridoxal 5'-phosphate salvage; pyridoxal 5'-phosphate from pyridoxamine 5'-phosphate: step 1/1.</text>
</comment>
<comment type="pathway">
    <text evidence="1">Cofactor metabolism; pyridoxal 5'-phosphate salvage; pyridoxal 5'-phosphate from pyridoxine 5'-phosphate: step 1/1.</text>
</comment>
<comment type="subunit">
    <text evidence="1">Homodimer.</text>
</comment>
<comment type="similarity">
    <text evidence="1">Belongs to the pyridoxamine 5'-phosphate oxidase family.</text>
</comment>
<proteinExistence type="inferred from homology"/>